<keyword id="KW-0067">ATP-binding</keyword>
<keyword id="KW-0997">Cell inner membrane</keyword>
<keyword id="KW-1003">Cell membrane</keyword>
<keyword id="KW-0472">Membrane</keyword>
<keyword id="KW-0547">Nucleotide-binding</keyword>
<keyword id="KW-1278">Translocase</keyword>
<keyword id="KW-0813">Transport</keyword>
<sequence>MMRVKHIAVGSRLLPLSFECKDGEVVHVVGPNGSGKSTLLAAISGTLTGRDGASGEVHVDDKNLLTLSLSEQAHVRGYLCQQSRPAFNVDVFQYLALSLPSGTAITDGKVRDAVNMVVELVQLQDKLHRSIQTLSGGEWQRVRLAGVCLQVWRTINPYSQLLILDEPAAPLDIAQEGLLYQLINAIAAQGIGVLVANHDLNRTLKHADKVLLLSNGVLHSSGRADDVLSEAGLAEVFKTQARKVMIDERPYLIFD</sequence>
<gene>
    <name evidence="1" type="primary">btuD</name>
    <name type="ordered locus">VP1312</name>
</gene>
<dbReference type="EC" id="7.6.2.8" evidence="1"/>
<dbReference type="EMBL" id="BA000031">
    <property type="protein sequence ID" value="BAC59575.1"/>
    <property type="molecule type" value="Genomic_DNA"/>
</dbReference>
<dbReference type="RefSeq" id="NP_797691.1">
    <property type="nucleotide sequence ID" value="NC_004603.1"/>
</dbReference>
<dbReference type="RefSeq" id="WP_005454996.1">
    <property type="nucleotide sequence ID" value="NC_004603.1"/>
</dbReference>
<dbReference type="SMR" id="Q87Q38"/>
<dbReference type="GeneID" id="1188817"/>
<dbReference type="KEGG" id="vpa:VP1312"/>
<dbReference type="PATRIC" id="fig|223926.6.peg.1254"/>
<dbReference type="eggNOG" id="COG4138">
    <property type="taxonomic scope" value="Bacteria"/>
</dbReference>
<dbReference type="HOGENOM" id="CLU_000604_1_11_6"/>
<dbReference type="Proteomes" id="UP000002493">
    <property type="component" value="Chromosome 1"/>
</dbReference>
<dbReference type="GO" id="GO:0005886">
    <property type="term" value="C:plasma membrane"/>
    <property type="evidence" value="ECO:0007669"/>
    <property type="project" value="UniProtKB-SubCell"/>
</dbReference>
<dbReference type="GO" id="GO:0015420">
    <property type="term" value="F:ABC-type vitamin B12 transporter activity"/>
    <property type="evidence" value="ECO:0007669"/>
    <property type="project" value="UniProtKB-UniRule"/>
</dbReference>
<dbReference type="GO" id="GO:0005524">
    <property type="term" value="F:ATP binding"/>
    <property type="evidence" value="ECO:0007669"/>
    <property type="project" value="UniProtKB-KW"/>
</dbReference>
<dbReference type="GO" id="GO:0016887">
    <property type="term" value="F:ATP hydrolysis activity"/>
    <property type="evidence" value="ECO:0007669"/>
    <property type="project" value="InterPro"/>
</dbReference>
<dbReference type="CDD" id="cd03214">
    <property type="entry name" value="ABC_Iron-Siderophores_B12_Hemin"/>
    <property type="match status" value="1"/>
</dbReference>
<dbReference type="FunFam" id="3.40.50.300:FF:000462">
    <property type="entry name" value="Vitamin B12 import ATP-binding protein BtuD"/>
    <property type="match status" value="1"/>
</dbReference>
<dbReference type="Gene3D" id="3.40.50.300">
    <property type="entry name" value="P-loop containing nucleotide triphosphate hydrolases"/>
    <property type="match status" value="1"/>
</dbReference>
<dbReference type="HAMAP" id="MF_01005">
    <property type="entry name" value="BtuD"/>
    <property type="match status" value="1"/>
</dbReference>
<dbReference type="InterPro" id="IPR003593">
    <property type="entry name" value="AAA+_ATPase"/>
</dbReference>
<dbReference type="InterPro" id="IPR003439">
    <property type="entry name" value="ABC_transporter-like_ATP-bd"/>
</dbReference>
<dbReference type="InterPro" id="IPR023693">
    <property type="entry name" value="ABC_transptr_BtuD"/>
</dbReference>
<dbReference type="InterPro" id="IPR050153">
    <property type="entry name" value="Metal_Ion_Import_ABC"/>
</dbReference>
<dbReference type="InterPro" id="IPR027417">
    <property type="entry name" value="P-loop_NTPase"/>
</dbReference>
<dbReference type="NCBIfam" id="NF002981">
    <property type="entry name" value="PRK03695.1"/>
    <property type="match status" value="1"/>
</dbReference>
<dbReference type="PANTHER" id="PTHR42734">
    <property type="entry name" value="METAL TRANSPORT SYSTEM ATP-BINDING PROTEIN TM_0124-RELATED"/>
    <property type="match status" value="1"/>
</dbReference>
<dbReference type="PANTHER" id="PTHR42734:SF18">
    <property type="entry name" value="VITAMIN B12 IMPORT ATP-BINDING PROTEIN BTUD"/>
    <property type="match status" value="1"/>
</dbReference>
<dbReference type="Pfam" id="PF00005">
    <property type="entry name" value="ABC_tran"/>
    <property type="match status" value="1"/>
</dbReference>
<dbReference type="SMART" id="SM00382">
    <property type="entry name" value="AAA"/>
    <property type="match status" value="1"/>
</dbReference>
<dbReference type="SUPFAM" id="SSF52540">
    <property type="entry name" value="P-loop containing nucleoside triphosphate hydrolases"/>
    <property type="match status" value="1"/>
</dbReference>
<dbReference type="PROSITE" id="PS50893">
    <property type="entry name" value="ABC_TRANSPORTER_2"/>
    <property type="match status" value="1"/>
</dbReference>
<reference key="1">
    <citation type="journal article" date="2003" name="Lancet">
        <title>Genome sequence of Vibrio parahaemolyticus: a pathogenic mechanism distinct from that of V. cholerae.</title>
        <authorList>
            <person name="Makino K."/>
            <person name="Oshima K."/>
            <person name="Kurokawa K."/>
            <person name="Yokoyama K."/>
            <person name="Uda T."/>
            <person name="Tagomori K."/>
            <person name="Iijima Y."/>
            <person name="Najima M."/>
            <person name="Nakano M."/>
            <person name="Yamashita A."/>
            <person name="Kubota Y."/>
            <person name="Kimura S."/>
            <person name="Yasunaga T."/>
            <person name="Honda T."/>
            <person name="Shinagawa H."/>
            <person name="Hattori M."/>
            <person name="Iida T."/>
        </authorList>
    </citation>
    <scope>NUCLEOTIDE SEQUENCE [LARGE SCALE GENOMIC DNA]</scope>
    <source>
        <strain>RIMD 2210633</strain>
    </source>
</reference>
<evidence type="ECO:0000255" key="1">
    <source>
        <dbReference type="HAMAP-Rule" id="MF_01005"/>
    </source>
</evidence>
<name>BTUD_VIBPA</name>
<proteinExistence type="inferred from homology"/>
<comment type="function">
    <text evidence="1">Part of the ABC transporter complex BtuCDF involved in vitamin B12 import. Responsible for energy coupling to the transport system.</text>
</comment>
<comment type="catalytic activity">
    <reaction evidence="1">
        <text>an R-cob(III)alamin(out) + ATP + H2O = an R-cob(III)alamin(in) + ADP + phosphate + H(+)</text>
        <dbReference type="Rhea" id="RHEA:17873"/>
        <dbReference type="ChEBI" id="CHEBI:15377"/>
        <dbReference type="ChEBI" id="CHEBI:15378"/>
        <dbReference type="ChEBI" id="CHEBI:30616"/>
        <dbReference type="ChEBI" id="CHEBI:43474"/>
        <dbReference type="ChEBI" id="CHEBI:140785"/>
        <dbReference type="ChEBI" id="CHEBI:456216"/>
        <dbReference type="EC" id="7.6.2.8"/>
    </reaction>
</comment>
<comment type="subunit">
    <text evidence="1">The complex is composed of two ATP-binding proteins (BtuD), two transmembrane proteins (BtuC) and a solute-binding protein (BtuF).</text>
</comment>
<comment type="subcellular location">
    <subcellularLocation>
        <location evidence="1">Cell inner membrane</location>
        <topology evidence="1">Peripheral membrane protein</topology>
    </subcellularLocation>
</comment>
<comment type="similarity">
    <text evidence="1">Belongs to the ABC transporter superfamily. Vitamin B12 importer (TC 3.A.1.13.1) family.</text>
</comment>
<feature type="chain" id="PRO_0000091962" description="Vitamin B12 import ATP-binding protein BtuD">
    <location>
        <begin position="1"/>
        <end position="255"/>
    </location>
</feature>
<feature type="domain" description="ABC transporter" evidence="1">
    <location>
        <begin position="2"/>
        <end position="240"/>
    </location>
</feature>
<feature type="binding site" evidence="1">
    <location>
        <begin position="30"/>
        <end position="37"/>
    </location>
    <ligand>
        <name>ATP</name>
        <dbReference type="ChEBI" id="CHEBI:30616"/>
    </ligand>
</feature>
<accession>Q87Q38</accession>
<organism>
    <name type="scientific">Vibrio parahaemolyticus serotype O3:K6 (strain RIMD 2210633)</name>
    <dbReference type="NCBI Taxonomy" id="223926"/>
    <lineage>
        <taxon>Bacteria</taxon>
        <taxon>Pseudomonadati</taxon>
        <taxon>Pseudomonadota</taxon>
        <taxon>Gammaproteobacteria</taxon>
        <taxon>Vibrionales</taxon>
        <taxon>Vibrionaceae</taxon>
        <taxon>Vibrio</taxon>
    </lineage>
</organism>
<protein>
    <recommendedName>
        <fullName evidence="1">Vitamin B12 import ATP-binding protein BtuD</fullName>
        <ecNumber evidence="1">7.6.2.8</ecNumber>
    </recommendedName>
    <alternativeName>
        <fullName evidence="1">Vitamin B12-transporting ATPase</fullName>
    </alternativeName>
</protein>